<accession>Q6F0J5</accession>
<keyword id="KW-0963">Cytoplasm</keyword>
<keyword id="KW-0251">Elongation factor</keyword>
<keyword id="KW-0342">GTP-binding</keyword>
<keyword id="KW-0378">Hydrolase</keyword>
<keyword id="KW-0460">Magnesium</keyword>
<keyword id="KW-0479">Metal-binding</keyword>
<keyword id="KW-0547">Nucleotide-binding</keyword>
<keyword id="KW-0648">Protein biosynthesis</keyword>
<keyword id="KW-1185">Reference proteome</keyword>
<proteinExistence type="inferred from homology"/>
<feature type="chain" id="PRO_1000015684" description="Elongation factor Tu">
    <location>
        <begin position="1"/>
        <end position="394"/>
    </location>
</feature>
<feature type="domain" description="tr-type G">
    <location>
        <begin position="10"/>
        <end position="204"/>
    </location>
</feature>
<feature type="region of interest" description="G1" evidence="1">
    <location>
        <begin position="19"/>
        <end position="26"/>
    </location>
</feature>
<feature type="region of interest" description="G2" evidence="1">
    <location>
        <begin position="60"/>
        <end position="64"/>
    </location>
</feature>
<feature type="region of interest" description="G3" evidence="1">
    <location>
        <begin position="81"/>
        <end position="84"/>
    </location>
</feature>
<feature type="region of interest" description="G4" evidence="1">
    <location>
        <begin position="136"/>
        <end position="139"/>
    </location>
</feature>
<feature type="region of interest" description="G5" evidence="1">
    <location>
        <begin position="174"/>
        <end position="176"/>
    </location>
</feature>
<feature type="binding site" evidence="2">
    <location>
        <begin position="19"/>
        <end position="26"/>
    </location>
    <ligand>
        <name>GTP</name>
        <dbReference type="ChEBI" id="CHEBI:37565"/>
    </ligand>
</feature>
<feature type="binding site" evidence="2">
    <location>
        <position position="26"/>
    </location>
    <ligand>
        <name>Mg(2+)</name>
        <dbReference type="ChEBI" id="CHEBI:18420"/>
    </ligand>
</feature>
<feature type="binding site" evidence="2">
    <location>
        <begin position="81"/>
        <end position="85"/>
    </location>
    <ligand>
        <name>GTP</name>
        <dbReference type="ChEBI" id="CHEBI:37565"/>
    </ligand>
</feature>
<feature type="binding site" evidence="2">
    <location>
        <begin position="136"/>
        <end position="139"/>
    </location>
    <ligand>
        <name>GTP</name>
        <dbReference type="ChEBI" id="CHEBI:37565"/>
    </ligand>
</feature>
<evidence type="ECO:0000250" key="1"/>
<evidence type="ECO:0000255" key="2">
    <source>
        <dbReference type="HAMAP-Rule" id="MF_00118"/>
    </source>
</evidence>
<comment type="function">
    <text evidence="2">GTP hydrolase that promotes the GTP-dependent binding of aminoacyl-tRNA to the A-site of ribosomes during protein biosynthesis.</text>
</comment>
<comment type="catalytic activity">
    <reaction evidence="2">
        <text>GTP + H2O = GDP + phosphate + H(+)</text>
        <dbReference type="Rhea" id="RHEA:19669"/>
        <dbReference type="ChEBI" id="CHEBI:15377"/>
        <dbReference type="ChEBI" id="CHEBI:15378"/>
        <dbReference type="ChEBI" id="CHEBI:37565"/>
        <dbReference type="ChEBI" id="CHEBI:43474"/>
        <dbReference type="ChEBI" id="CHEBI:58189"/>
        <dbReference type="EC" id="3.6.5.3"/>
    </reaction>
    <physiologicalReaction direction="left-to-right" evidence="2">
        <dbReference type="Rhea" id="RHEA:19670"/>
    </physiologicalReaction>
</comment>
<comment type="subunit">
    <text evidence="2">Monomer.</text>
</comment>
<comment type="subcellular location">
    <subcellularLocation>
        <location evidence="2">Cytoplasm</location>
    </subcellularLocation>
</comment>
<comment type="similarity">
    <text evidence="2">Belongs to the TRAFAC class translation factor GTPase superfamily. Classic translation factor GTPase family. EF-Tu/EF-1A subfamily.</text>
</comment>
<dbReference type="EC" id="3.6.5.3" evidence="2"/>
<dbReference type="EMBL" id="AE017263">
    <property type="protein sequence ID" value="AAT75978.1"/>
    <property type="molecule type" value="Genomic_DNA"/>
</dbReference>
<dbReference type="RefSeq" id="WP_011183518.1">
    <property type="nucleotide sequence ID" value="NC_006055.1"/>
</dbReference>
<dbReference type="RefSeq" id="YP_053862.1">
    <property type="nucleotide sequence ID" value="NC_006055.1"/>
</dbReference>
<dbReference type="SMR" id="Q6F0J5"/>
<dbReference type="STRING" id="265311.Mfl621"/>
<dbReference type="PaxDb" id="265311-Mfl621"/>
<dbReference type="EnsemblBacteria" id="AAT75978">
    <property type="protein sequence ID" value="AAT75978"/>
    <property type="gene ID" value="Mfl621"/>
</dbReference>
<dbReference type="GeneID" id="2898215"/>
<dbReference type="KEGG" id="mfl:Mfl621"/>
<dbReference type="PATRIC" id="fig|265311.5.peg.624"/>
<dbReference type="eggNOG" id="COG0050">
    <property type="taxonomic scope" value="Bacteria"/>
</dbReference>
<dbReference type="HOGENOM" id="CLU_007265_0_1_14"/>
<dbReference type="OrthoDB" id="9804504at2"/>
<dbReference type="Proteomes" id="UP000006647">
    <property type="component" value="Chromosome"/>
</dbReference>
<dbReference type="GO" id="GO:0005829">
    <property type="term" value="C:cytosol"/>
    <property type="evidence" value="ECO:0007669"/>
    <property type="project" value="TreeGrafter"/>
</dbReference>
<dbReference type="GO" id="GO:0005525">
    <property type="term" value="F:GTP binding"/>
    <property type="evidence" value="ECO:0007669"/>
    <property type="project" value="UniProtKB-UniRule"/>
</dbReference>
<dbReference type="GO" id="GO:0003924">
    <property type="term" value="F:GTPase activity"/>
    <property type="evidence" value="ECO:0007669"/>
    <property type="project" value="InterPro"/>
</dbReference>
<dbReference type="GO" id="GO:0003746">
    <property type="term" value="F:translation elongation factor activity"/>
    <property type="evidence" value="ECO:0007669"/>
    <property type="project" value="UniProtKB-UniRule"/>
</dbReference>
<dbReference type="CDD" id="cd01884">
    <property type="entry name" value="EF_Tu"/>
    <property type="match status" value="1"/>
</dbReference>
<dbReference type="CDD" id="cd03697">
    <property type="entry name" value="EFTU_II"/>
    <property type="match status" value="1"/>
</dbReference>
<dbReference type="CDD" id="cd03707">
    <property type="entry name" value="EFTU_III"/>
    <property type="match status" value="1"/>
</dbReference>
<dbReference type="FunFam" id="2.40.30.10:FF:000001">
    <property type="entry name" value="Elongation factor Tu"/>
    <property type="match status" value="1"/>
</dbReference>
<dbReference type="FunFam" id="3.40.50.300:FF:000003">
    <property type="entry name" value="Elongation factor Tu"/>
    <property type="match status" value="1"/>
</dbReference>
<dbReference type="Gene3D" id="3.40.50.300">
    <property type="entry name" value="P-loop containing nucleotide triphosphate hydrolases"/>
    <property type="match status" value="1"/>
</dbReference>
<dbReference type="Gene3D" id="2.40.30.10">
    <property type="entry name" value="Translation factors"/>
    <property type="match status" value="2"/>
</dbReference>
<dbReference type="HAMAP" id="MF_00118_B">
    <property type="entry name" value="EF_Tu_B"/>
    <property type="match status" value="1"/>
</dbReference>
<dbReference type="InterPro" id="IPR041709">
    <property type="entry name" value="EF-Tu_GTP-bd"/>
</dbReference>
<dbReference type="InterPro" id="IPR050055">
    <property type="entry name" value="EF-Tu_GTPase"/>
</dbReference>
<dbReference type="InterPro" id="IPR004161">
    <property type="entry name" value="EFTu-like_2"/>
</dbReference>
<dbReference type="InterPro" id="IPR033720">
    <property type="entry name" value="EFTU_2"/>
</dbReference>
<dbReference type="InterPro" id="IPR031157">
    <property type="entry name" value="G_TR_CS"/>
</dbReference>
<dbReference type="InterPro" id="IPR027417">
    <property type="entry name" value="P-loop_NTPase"/>
</dbReference>
<dbReference type="InterPro" id="IPR005225">
    <property type="entry name" value="Small_GTP-bd"/>
</dbReference>
<dbReference type="InterPro" id="IPR000795">
    <property type="entry name" value="T_Tr_GTP-bd_dom"/>
</dbReference>
<dbReference type="InterPro" id="IPR009000">
    <property type="entry name" value="Transl_B-barrel_sf"/>
</dbReference>
<dbReference type="InterPro" id="IPR009001">
    <property type="entry name" value="Transl_elong_EF1A/Init_IF2_C"/>
</dbReference>
<dbReference type="InterPro" id="IPR004541">
    <property type="entry name" value="Transl_elong_EFTu/EF1A_bac/org"/>
</dbReference>
<dbReference type="InterPro" id="IPR004160">
    <property type="entry name" value="Transl_elong_EFTu/EF1A_C"/>
</dbReference>
<dbReference type="NCBIfam" id="TIGR00485">
    <property type="entry name" value="EF-Tu"/>
    <property type="match status" value="1"/>
</dbReference>
<dbReference type="NCBIfam" id="NF000766">
    <property type="entry name" value="PRK00049.1"/>
    <property type="match status" value="1"/>
</dbReference>
<dbReference type="NCBIfam" id="NF009372">
    <property type="entry name" value="PRK12735.1"/>
    <property type="match status" value="1"/>
</dbReference>
<dbReference type="NCBIfam" id="NF009373">
    <property type="entry name" value="PRK12736.1"/>
    <property type="match status" value="1"/>
</dbReference>
<dbReference type="NCBIfam" id="TIGR00231">
    <property type="entry name" value="small_GTP"/>
    <property type="match status" value="1"/>
</dbReference>
<dbReference type="PANTHER" id="PTHR43721:SF22">
    <property type="entry name" value="ELONGATION FACTOR TU, MITOCHONDRIAL"/>
    <property type="match status" value="1"/>
</dbReference>
<dbReference type="PANTHER" id="PTHR43721">
    <property type="entry name" value="ELONGATION FACTOR TU-RELATED"/>
    <property type="match status" value="1"/>
</dbReference>
<dbReference type="Pfam" id="PF00009">
    <property type="entry name" value="GTP_EFTU"/>
    <property type="match status" value="1"/>
</dbReference>
<dbReference type="Pfam" id="PF03144">
    <property type="entry name" value="GTP_EFTU_D2"/>
    <property type="match status" value="1"/>
</dbReference>
<dbReference type="Pfam" id="PF03143">
    <property type="entry name" value="GTP_EFTU_D3"/>
    <property type="match status" value="1"/>
</dbReference>
<dbReference type="PRINTS" id="PR00315">
    <property type="entry name" value="ELONGATNFCT"/>
</dbReference>
<dbReference type="SUPFAM" id="SSF50465">
    <property type="entry name" value="EF-Tu/eEF-1alpha/eIF2-gamma C-terminal domain"/>
    <property type="match status" value="1"/>
</dbReference>
<dbReference type="SUPFAM" id="SSF52540">
    <property type="entry name" value="P-loop containing nucleoside triphosphate hydrolases"/>
    <property type="match status" value="1"/>
</dbReference>
<dbReference type="SUPFAM" id="SSF50447">
    <property type="entry name" value="Translation proteins"/>
    <property type="match status" value="1"/>
</dbReference>
<dbReference type="PROSITE" id="PS00301">
    <property type="entry name" value="G_TR_1"/>
    <property type="match status" value="1"/>
</dbReference>
<dbReference type="PROSITE" id="PS51722">
    <property type="entry name" value="G_TR_2"/>
    <property type="match status" value="1"/>
</dbReference>
<sequence length="394" mass="42905">MAKEAFDRSLPHVNIGTIGHVDHGKTTLTAAITKVLADKGGAEFKDYANIDNAPEERERGITINTSHVEYKTENRHYAHVDCPGHADYVKNMITGAAQMDGGILVVAATDGPMPQTREHILLSRQVGVPKIVVFLNKCDMVDDEEMIDLVEMEVRDLLSAYDFDGDGAPVIRGSALGALNGEAKWVAAIEELMAAVDEYIPTPTRDSDKTFLMPVEDVFTITGRGTVATGRVERGTIKVNEEVEIVGLVEEAKKTVVTGLEMFRKLLDFAEAGDNVGALLRGVDRESIERGQVLAKPGTIKPHTKLQASVYALTTEEGGRQKPFFNKYRPQFYFRTTDVTGEVILPAGTDMVMPGDNVEMTVELIKPIAVEDGTKFSIREGGRTIGAGTVISVQ</sequence>
<organism>
    <name type="scientific">Mesoplasma florum (strain ATCC 33453 / NBRC 100688 / NCTC 11704 / L1)</name>
    <name type="common">Acholeplasma florum</name>
    <dbReference type="NCBI Taxonomy" id="265311"/>
    <lineage>
        <taxon>Bacteria</taxon>
        <taxon>Bacillati</taxon>
        <taxon>Mycoplasmatota</taxon>
        <taxon>Mollicutes</taxon>
        <taxon>Entomoplasmatales</taxon>
        <taxon>Entomoplasmataceae</taxon>
        <taxon>Mesoplasma</taxon>
    </lineage>
</organism>
<reference key="1">
    <citation type="submission" date="2004-06" db="EMBL/GenBank/DDBJ databases">
        <authorList>
            <person name="Birren B.W."/>
            <person name="Stange-Thomann N."/>
            <person name="Hafez N."/>
            <person name="DeCaprio D."/>
            <person name="Fisher S."/>
            <person name="Butler J."/>
            <person name="Elkins T."/>
            <person name="Kodira C.D."/>
            <person name="Major J."/>
            <person name="Wang S."/>
            <person name="Nicol R."/>
            <person name="Nusbaum C."/>
        </authorList>
    </citation>
    <scope>NUCLEOTIDE SEQUENCE [LARGE SCALE GENOMIC DNA]</scope>
    <source>
        <strain>ATCC 33453 / NBRC 100688 / NCTC 11704 / L1</strain>
    </source>
</reference>
<protein>
    <recommendedName>
        <fullName evidence="2">Elongation factor Tu</fullName>
        <shortName evidence="2">EF-Tu</shortName>
        <ecNumber evidence="2">3.6.5.3</ecNumber>
    </recommendedName>
</protein>
<name>EFTU_MESFL</name>
<gene>
    <name evidence="2" type="primary">tuf</name>
    <name type="ordered locus">Mfl621</name>
</gene>